<accession>A1VL83</accession>
<dbReference type="EC" id="6.1.1.17" evidence="1"/>
<dbReference type="EMBL" id="CP000529">
    <property type="protein sequence ID" value="ABM36411.1"/>
    <property type="molecule type" value="Genomic_DNA"/>
</dbReference>
<dbReference type="RefSeq" id="WP_011800505.1">
    <property type="nucleotide sequence ID" value="NC_008781.1"/>
</dbReference>
<dbReference type="SMR" id="A1VL83"/>
<dbReference type="STRING" id="365044.Pnap_1094"/>
<dbReference type="KEGG" id="pna:Pnap_1094"/>
<dbReference type="eggNOG" id="COG0008">
    <property type="taxonomic scope" value="Bacteria"/>
</dbReference>
<dbReference type="HOGENOM" id="CLU_015768_6_0_4"/>
<dbReference type="OrthoDB" id="9807503at2"/>
<dbReference type="Proteomes" id="UP000000644">
    <property type="component" value="Chromosome"/>
</dbReference>
<dbReference type="GO" id="GO:0005829">
    <property type="term" value="C:cytosol"/>
    <property type="evidence" value="ECO:0007669"/>
    <property type="project" value="TreeGrafter"/>
</dbReference>
<dbReference type="GO" id="GO:0005524">
    <property type="term" value="F:ATP binding"/>
    <property type="evidence" value="ECO:0007669"/>
    <property type="project" value="UniProtKB-UniRule"/>
</dbReference>
<dbReference type="GO" id="GO:0004818">
    <property type="term" value="F:glutamate-tRNA ligase activity"/>
    <property type="evidence" value="ECO:0007669"/>
    <property type="project" value="UniProtKB-UniRule"/>
</dbReference>
<dbReference type="GO" id="GO:0000049">
    <property type="term" value="F:tRNA binding"/>
    <property type="evidence" value="ECO:0007669"/>
    <property type="project" value="InterPro"/>
</dbReference>
<dbReference type="GO" id="GO:0008270">
    <property type="term" value="F:zinc ion binding"/>
    <property type="evidence" value="ECO:0007669"/>
    <property type="project" value="InterPro"/>
</dbReference>
<dbReference type="GO" id="GO:0006424">
    <property type="term" value="P:glutamyl-tRNA aminoacylation"/>
    <property type="evidence" value="ECO:0007669"/>
    <property type="project" value="UniProtKB-UniRule"/>
</dbReference>
<dbReference type="CDD" id="cd00808">
    <property type="entry name" value="GluRS_core"/>
    <property type="match status" value="1"/>
</dbReference>
<dbReference type="FunFam" id="3.40.50.620:FF:000007">
    <property type="entry name" value="Glutamate--tRNA ligase"/>
    <property type="match status" value="1"/>
</dbReference>
<dbReference type="Gene3D" id="1.10.10.350">
    <property type="match status" value="1"/>
</dbReference>
<dbReference type="Gene3D" id="3.40.50.620">
    <property type="entry name" value="HUPs"/>
    <property type="match status" value="1"/>
</dbReference>
<dbReference type="HAMAP" id="MF_00022">
    <property type="entry name" value="Glu_tRNA_synth_type1"/>
    <property type="match status" value="1"/>
</dbReference>
<dbReference type="InterPro" id="IPR045462">
    <property type="entry name" value="aa-tRNA-synth_I_cd-bd"/>
</dbReference>
<dbReference type="InterPro" id="IPR020751">
    <property type="entry name" value="aa-tRNA-synth_I_codon-bd_sub2"/>
</dbReference>
<dbReference type="InterPro" id="IPR001412">
    <property type="entry name" value="aa-tRNA-synth_I_CS"/>
</dbReference>
<dbReference type="InterPro" id="IPR008925">
    <property type="entry name" value="aa_tRNA-synth_I_cd-bd_sf"/>
</dbReference>
<dbReference type="InterPro" id="IPR004527">
    <property type="entry name" value="Glu-tRNA-ligase_bac/mito"/>
</dbReference>
<dbReference type="InterPro" id="IPR000924">
    <property type="entry name" value="Glu/Gln-tRNA-synth"/>
</dbReference>
<dbReference type="InterPro" id="IPR020058">
    <property type="entry name" value="Glu/Gln-tRNA-synth_Ib_cat-dom"/>
</dbReference>
<dbReference type="InterPro" id="IPR049940">
    <property type="entry name" value="GluQ/Sye"/>
</dbReference>
<dbReference type="InterPro" id="IPR033910">
    <property type="entry name" value="GluRS_core"/>
</dbReference>
<dbReference type="InterPro" id="IPR014729">
    <property type="entry name" value="Rossmann-like_a/b/a_fold"/>
</dbReference>
<dbReference type="NCBIfam" id="TIGR00464">
    <property type="entry name" value="gltX_bact"/>
    <property type="match status" value="1"/>
</dbReference>
<dbReference type="PANTHER" id="PTHR43311">
    <property type="entry name" value="GLUTAMATE--TRNA LIGASE"/>
    <property type="match status" value="1"/>
</dbReference>
<dbReference type="PANTHER" id="PTHR43311:SF2">
    <property type="entry name" value="GLUTAMATE--TRNA LIGASE, MITOCHONDRIAL-RELATED"/>
    <property type="match status" value="1"/>
</dbReference>
<dbReference type="Pfam" id="PF19269">
    <property type="entry name" value="Anticodon_2"/>
    <property type="match status" value="1"/>
</dbReference>
<dbReference type="Pfam" id="PF00749">
    <property type="entry name" value="tRNA-synt_1c"/>
    <property type="match status" value="1"/>
</dbReference>
<dbReference type="PRINTS" id="PR00987">
    <property type="entry name" value="TRNASYNTHGLU"/>
</dbReference>
<dbReference type="SUPFAM" id="SSF48163">
    <property type="entry name" value="An anticodon-binding domain of class I aminoacyl-tRNA synthetases"/>
    <property type="match status" value="1"/>
</dbReference>
<dbReference type="SUPFAM" id="SSF52374">
    <property type="entry name" value="Nucleotidylyl transferase"/>
    <property type="match status" value="1"/>
</dbReference>
<dbReference type="PROSITE" id="PS00178">
    <property type="entry name" value="AA_TRNA_LIGASE_I"/>
    <property type="match status" value="1"/>
</dbReference>
<organism>
    <name type="scientific">Polaromonas naphthalenivorans (strain CJ2)</name>
    <dbReference type="NCBI Taxonomy" id="365044"/>
    <lineage>
        <taxon>Bacteria</taxon>
        <taxon>Pseudomonadati</taxon>
        <taxon>Pseudomonadota</taxon>
        <taxon>Betaproteobacteria</taxon>
        <taxon>Burkholderiales</taxon>
        <taxon>Comamonadaceae</taxon>
        <taxon>Polaromonas</taxon>
    </lineage>
</organism>
<comment type="function">
    <text evidence="1">Catalyzes the attachment of glutamate to tRNA(Glu) in a two-step reaction: glutamate is first activated by ATP to form Glu-AMP and then transferred to the acceptor end of tRNA(Glu).</text>
</comment>
<comment type="catalytic activity">
    <reaction evidence="1">
        <text>tRNA(Glu) + L-glutamate + ATP = L-glutamyl-tRNA(Glu) + AMP + diphosphate</text>
        <dbReference type="Rhea" id="RHEA:23540"/>
        <dbReference type="Rhea" id="RHEA-COMP:9663"/>
        <dbReference type="Rhea" id="RHEA-COMP:9680"/>
        <dbReference type="ChEBI" id="CHEBI:29985"/>
        <dbReference type="ChEBI" id="CHEBI:30616"/>
        <dbReference type="ChEBI" id="CHEBI:33019"/>
        <dbReference type="ChEBI" id="CHEBI:78442"/>
        <dbReference type="ChEBI" id="CHEBI:78520"/>
        <dbReference type="ChEBI" id="CHEBI:456215"/>
        <dbReference type="EC" id="6.1.1.17"/>
    </reaction>
</comment>
<comment type="subunit">
    <text evidence="1">Monomer.</text>
</comment>
<comment type="subcellular location">
    <subcellularLocation>
        <location evidence="1">Cytoplasm</location>
    </subcellularLocation>
</comment>
<comment type="similarity">
    <text evidence="1">Belongs to the class-I aminoacyl-tRNA synthetase family. Glutamate--tRNA ligase type 1 subfamily.</text>
</comment>
<name>SYE_POLNA</name>
<gene>
    <name evidence="1" type="primary">gltX</name>
    <name type="ordered locus">Pnap_1094</name>
</gene>
<feature type="chain" id="PRO_1000001931" description="Glutamate--tRNA ligase">
    <location>
        <begin position="1"/>
        <end position="464"/>
    </location>
</feature>
<feature type="short sequence motif" description="'HIGH' region" evidence="1">
    <location>
        <begin position="11"/>
        <end position="21"/>
    </location>
</feature>
<feature type="short sequence motif" description="'KMSKS' region" evidence="1">
    <location>
        <begin position="243"/>
        <end position="247"/>
    </location>
</feature>
<feature type="binding site" evidence="1">
    <location>
        <position position="246"/>
    </location>
    <ligand>
        <name>ATP</name>
        <dbReference type="ChEBI" id="CHEBI:30616"/>
    </ligand>
</feature>
<evidence type="ECO:0000255" key="1">
    <source>
        <dbReference type="HAMAP-Rule" id="MF_00022"/>
    </source>
</evidence>
<sequence>MTQKTRTRFAPSPTGFIHLGNIRSALYPWAFARATGGDFILRIEDTDVDRSSQAAVDVIIEGMRWLGLDYDEGPFYQMQRMDRYKAVLAEMVNAGHVYPCYMSVAELDALREAQMAAKEKPRYDGTWRPEPGKTLPAIPEGVQPVLRFKNPQGGAVVWDDKVKGRIEISNDELDDLVIARPDGTPTYNFCVVVDDMDMAITHVIRGDDHVNNTPRQINIFRALGREVPVYAHLPTVLNEQGEKMSKRNGAKPVTQYAAEGYLPDAMVNYLARLGWSHGDDEIFSREQFLQWFNLDHLGKSAAQFDEAKLRWVNAQHLKAMADDQLAERVQPFLAALDVSGLDAGWLAQSCALFKDRCSTLVELAGWLKLLVTGAEPSAQDVSTHVTDAVRPALAKLAQALATCEWTKAAIAAAIKQVLLDTGLKMPQLAMPVRVLLMGTPQTPSLDAILSLMAREKVIAKLNLV</sequence>
<protein>
    <recommendedName>
        <fullName evidence="1">Glutamate--tRNA ligase</fullName>
        <ecNumber evidence="1">6.1.1.17</ecNumber>
    </recommendedName>
    <alternativeName>
        <fullName evidence="1">Glutamyl-tRNA synthetase</fullName>
        <shortName evidence="1">GluRS</shortName>
    </alternativeName>
</protein>
<proteinExistence type="inferred from homology"/>
<reference key="1">
    <citation type="journal article" date="2009" name="Environ. Microbiol.">
        <title>The genome of Polaromonas naphthalenivorans strain CJ2, isolated from coal tar-contaminated sediment, reveals physiological and metabolic versatility and evolution through extensive horizontal gene transfer.</title>
        <authorList>
            <person name="Yagi J.M."/>
            <person name="Sims D."/>
            <person name="Brettin T."/>
            <person name="Bruce D."/>
            <person name="Madsen E.L."/>
        </authorList>
    </citation>
    <scope>NUCLEOTIDE SEQUENCE [LARGE SCALE GENOMIC DNA]</scope>
    <source>
        <strain>CJ2</strain>
    </source>
</reference>
<keyword id="KW-0030">Aminoacyl-tRNA synthetase</keyword>
<keyword id="KW-0067">ATP-binding</keyword>
<keyword id="KW-0963">Cytoplasm</keyword>
<keyword id="KW-0436">Ligase</keyword>
<keyword id="KW-0547">Nucleotide-binding</keyword>
<keyword id="KW-0648">Protein biosynthesis</keyword>
<keyword id="KW-1185">Reference proteome</keyword>